<geneLocation type="plasmid">
    <name>pNL1</name>
</geneLocation>
<feature type="chain" id="PRO_0000188830" description="Putative 4-hydroxythreonine-4-phosphate dehydrogenase">
    <location>
        <begin position="1"/>
        <end position="330"/>
    </location>
</feature>
<feature type="binding site" evidence="1">
    <location>
        <position position="169"/>
    </location>
    <ligand>
        <name>a divalent metal cation</name>
        <dbReference type="ChEBI" id="CHEBI:60240"/>
        <note>ligand shared between dimeric partners</note>
    </ligand>
</feature>
<feature type="binding site" evidence="1">
    <location>
        <position position="213"/>
    </location>
    <ligand>
        <name>a divalent metal cation</name>
        <dbReference type="ChEBI" id="CHEBI:60240"/>
        <note>ligand shared between dimeric partners</note>
    </ligand>
</feature>
<feature type="binding site" evidence="1">
    <location>
        <position position="263"/>
    </location>
    <ligand>
        <name>a divalent metal cation</name>
        <dbReference type="ChEBI" id="CHEBI:60240"/>
        <note>ligand shared between dimeric partners</note>
    </ligand>
</feature>
<dbReference type="EC" id="1.1.1.262" evidence="1"/>
<dbReference type="EMBL" id="AF079317">
    <property type="protein sequence ID" value="AAD04003.1"/>
    <property type="molecule type" value="Genomic_DNA"/>
</dbReference>
<dbReference type="PIR" id="T31279">
    <property type="entry name" value="T31279"/>
</dbReference>
<dbReference type="RefSeq" id="NP_049207.1">
    <property type="nucleotide sequence ID" value="NC_002033.1"/>
</dbReference>
<dbReference type="RefSeq" id="WP_010891025.1">
    <property type="nucleotide sequence ID" value="NZ_FMVR01000008.1"/>
</dbReference>
<dbReference type="SMR" id="O85987"/>
<dbReference type="OMA" id="KANHVNM"/>
<dbReference type="OrthoDB" id="9801783at2"/>
<dbReference type="UniPathway" id="UPA00244">
    <property type="reaction ID" value="UER00312"/>
</dbReference>
<dbReference type="GO" id="GO:0005737">
    <property type="term" value="C:cytoplasm"/>
    <property type="evidence" value="ECO:0007669"/>
    <property type="project" value="UniProtKB-SubCell"/>
</dbReference>
<dbReference type="GO" id="GO:0050570">
    <property type="term" value="F:4-hydroxythreonine-4-phosphate dehydrogenase activity"/>
    <property type="evidence" value="ECO:0007669"/>
    <property type="project" value="UniProtKB-EC"/>
</dbReference>
<dbReference type="GO" id="GO:0046872">
    <property type="term" value="F:metal ion binding"/>
    <property type="evidence" value="ECO:0007669"/>
    <property type="project" value="UniProtKB-KW"/>
</dbReference>
<dbReference type="GO" id="GO:0051287">
    <property type="term" value="F:NAD binding"/>
    <property type="evidence" value="ECO:0007669"/>
    <property type="project" value="InterPro"/>
</dbReference>
<dbReference type="GO" id="GO:0008615">
    <property type="term" value="P:pyridoxine biosynthetic process"/>
    <property type="evidence" value="ECO:0007669"/>
    <property type="project" value="UniProtKB-KW"/>
</dbReference>
<dbReference type="Gene3D" id="3.40.718.10">
    <property type="entry name" value="Isopropylmalate Dehydrogenase"/>
    <property type="match status" value="1"/>
</dbReference>
<dbReference type="InterPro" id="IPR005255">
    <property type="entry name" value="PdxA_fam"/>
</dbReference>
<dbReference type="PANTHER" id="PTHR30004">
    <property type="entry name" value="4-HYDROXYTHREONINE-4-PHOSPHATE DEHYDROGENASE"/>
    <property type="match status" value="1"/>
</dbReference>
<dbReference type="PANTHER" id="PTHR30004:SF6">
    <property type="entry name" value="D-THREONATE 4-PHOSPHATE DEHYDROGENASE"/>
    <property type="match status" value="1"/>
</dbReference>
<dbReference type="Pfam" id="PF04166">
    <property type="entry name" value="PdxA"/>
    <property type="match status" value="1"/>
</dbReference>
<dbReference type="SUPFAM" id="SSF53659">
    <property type="entry name" value="Isocitrate/Isopropylmalate dehydrogenase-like"/>
    <property type="match status" value="1"/>
</dbReference>
<sequence>MSTASERVRPVVGTMIGDPAGIGPEVAVRALADGAVHTDSIPVLVGSAAAVERALDFTGTKARLRVMRGFEKPSDDPAIIDVIDTGALPDGVLPLGEDTEAAGHATAQWLDELDALARDGSFAATIMGPISTGSLKLAKKLDRVISPTPGESYLVLLTGPLRVAHLTDHMSLRQVIDVISADLVATAVGQLHEAMQSWGIAQPRIAVAGLNPHAMGDEDRLEIAPGIEAARARGIDVEGPIAPDSVFRHCIEGRYDMVLAMFHDQGHIAVKTWGFSGNSVIIMGPPYLHMSVAHGTAYDIVGTGKADAAMMLSAMRTCGRLASGRGFEQA</sequence>
<name>PDXAL_NOVAR</name>
<keyword id="KW-0170">Cobalt</keyword>
<keyword id="KW-0963">Cytoplasm</keyword>
<keyword id="KW-0460">Magnesium</keyword>
<keyword id="KW-0479">Metal-binding</keyword>
<keyword id="KW-0520">NAD</keyword>
<keyword id="KW-0521">NADP</keyword>
<keyword id="KW-0560">Oxidoreductase</keyword>
<keyword id="KW-0614">Plasmid</keyword>
<keyword id="KW-0664">Pyridoxine biosynthesis</keyword>
<keyword id="KW-0862">Zinc</keyword>
<protein>
    <recommendedName>
        <fullName evidence="1">Putative 4-hydroxythreonine-4-phosphate dehydrogenase</fullName>
        <ecNumber evidence="1">1.1.1.262</ecNumber>
    </recommendedName>
    <alternativeName>
        <fullName evidence="1">4-(phosphohydroxy)-L-threonine dehydrogenase</fullName>
    </alternativeName>
</protein>
<comment type="function">
    <text evidence="1">Catalyzes the NAD(P)-dependent oxidation of 4-(phosphooxy)-L-threonine (HTP) into 2-amino-3-oxo-4-(phosphooxy)butyric acid which spontaneously decarboxylates to form 3-amino-2-oxopropyl phosphate (AHAP).</text>
</comment>
<comment type="catalytic activity">
    <reaction evidence="1">
        <text>4-(phosphooxy)-L-threonine + NAD(+) = 3-amino-2-oxopropyl phosphate + CO2 + NADH</text>
        <dbReference type="Rhea" id="RHEA:32275"/>
        <dbReference type="ChEBI" id="CHEBI:16526"/>
        <dbReference type="ChEBI" id="CHEBI:57279"/>
        <dbReference type="ChEBI" id="CHEBI:57540"/>
        <dbReference type="ChEBI" id="CHEBI:57945"/>
        <dbReference type="ChEBI" id="CHEBI:58452"/>
        <dbReference type="EC" id="1.1.1.262"/>
    </reaction>
</comment>
<comment type="cofactor">
    <cofactor evidence="1">
        <name>Zn(2+)</name>
        <dbReference type="ChEBI" id="CHEBI:29105"/>
    </cofactor>
    <cofactor evidence="1">
        <name>Mg(2+)</name>
        <dbReference type="ChEBI" id="CHEBI:18420"/>
    </cofactor>
    <cofactor evidence="1">
        <name>Co(2+)</name>
        <dbReference type="ChEBI" id="CHEBI:48828"/>
    </cofactor>
    <text evidence="1">Binds 1 divalent metal cation per subunit. Can use ions such as Zn(2+), Mg(2+) or Co(2+).</text>
</comment>
<comment type="pathway">
    <text evidence="1">Cofactor biosynthesis; pyridoxine 5'-phosphate biosynthesis; pyridoxine 5'-phosphate from D-erythrose 4-phosphate: step 4/5.</text>
</comment>
<comment type="subunit">
    <text evidence="1">Homodimer.</text>
</comment>
<comment type="subcellular location">
    <subcellularLocation>
        <location evidence="1">Cytoplasm</location>
    </subcellularLocation>
</comment>
<comment type="miscellaneous">
    <text evidence="1">The active site is located at the dimer interface.</text>
</comment>
<comment type="similarity">
    <text evidence="2">Belongs to the PdxA family.</text>
</comment>
<reference key="1">
    <citation type="submission" date="1998-07" db="EMBL/GenBank/DDBJ databases">
        <title>Complete sequence of a 184 kb catabolic plasmid from Sphingomonas aromaticivorans strain F199.</title>
        <authorList>
            <person name="Romine M.F."/>
            <person name="Stillwell L.C."/>
            <person name="Wong K.-K."/>
            <person name="Thurston S.J."/>
            <person name="Sisk E.C."/>
            <person name="Sensen C.W."/>
            <person name="Gaasterland T."/>
            <person name="Saffer J.D."/>
            <person name="Fredrickson J.K."/>
        </authorList>
    </citation>
    <scope>NUCLEOTIDE SEQUENCE [GENOMIC DNA]</scope>
    <source>
        <strain>ATCC 700278 / DSM 12444 / F199</strain>
    </source>
</reference>
<accession>O85987</accession>
<organism>
    <name type="scientific">Novosphingobium aromaticivorans</name>
    <name type="common">Sphingomonas aromaticivorans</name>
    <dbReference type="NCBI Taxonomy" id="48935"/>
    <lineage>
        <taxon>Bacteria</taxon>
        <taxon>Pseudomonadati</taxon>
        <taxon>Pseudomonadota</taxon>
        <taxon>Alphaproteobacteria</taxon>
        <taxon>Sphingomonadales</taxon>
        <taxon>Sphingomonadaceae</taxon>
        <taxon>Novosphingobium</taxon>
    </lineage>
</organism>
<proteinExistence type="inferred from homology"/>
<evidence type="ECO:0000250" key="1">
    <source>
        <dbReference type="UniProtKB" id="P19624"/>
    </source>
</evidence>
<evidence type="ECO:0000305" key="2"/>